<accession>P57974</accession>
<organism>
    <name type="scientific">Pasteurella multocida (strain Pm70)</name>
    <dbReference type="NCBI Taxonomy" id="272843"/>
    <lineage>
        <taxon>Bacteria</taxon>
        <taxon>Pseudomonadati</taxon>
        <taxon>Pseudomonadota</taxon>
        <taxon>Gammaproteobacteria</taxon>
        <taxon>Pasteurellales</taxon>
        <taxon>Pasteurellaceae</taxon>
        <taxon>Pasteurella</taxon>
    </lineage>
</organism>
<comment type="function">
    <text evidence="1">Involved in DNA repair and RecF pathway recombination.</text>
</comment>
<comment type="similarity">
    <text evidence="2">Belongs to the RecO family.</text>
</comment>
<comment type="sequence caution" evidence="2">
    <conflict type="erroneous initiation">
        <sequence resource="EMBL-CDS" id="AAK03951"/>
    </conflict>
</comment>
<proteinExistence type="inferred from homology"/>
<protein>
    <recommendedName>
        <fullName>DNA repair protein RecO</fullName>
    </recommendedName>
    <alternativeName>
        <fullName>Recombination protein O</fullName>
    </alternativeName>
</protein>
<evidence type="ECO:0000250" key="1"/>
<evidence type="ECO:0000305" key="2"/>
<reference key="1">
    <citation type="journal article" date="2001" name="Proc. Natl. Acad. Sci. U.S.A.">
        <title>Complete genomic sequence of Pasteurella multocida Pm70.</title>
        <authorList>
            <person name="May B.J."/>
            <person name="Zhang Q."/>
            <person name="Li L.L."/>
            <person name="Paustian M.L."/>
            <person name="Whittam T.S."/>
            <person name="Kapur V."/>
        </authorList>
    </citation>
    <scope>NUCLEOTIDE SEQUENCE [LARGE SCALE GENOMIC DNA]</scope>
    <source>
        <strain>Pm70</strain>
    </source>
</reference>
<dbReference type="EMBL" id="AE004439">
    <property type="protein sequence ID" value="AAK03951.1"/>
    <property type="status" value="ALT_INIT"/>
    <property type="molecule type" value="Genomic_DNA"/>
</dbReference>
<dbReference type="RefSeq" id="WP_005752341.1">
    <property type="nucleotide sequence ID" value="NC_002663.1"/>
</dbReference>
<dbReference type="SMR" id="P57974"/>
<dbReference type="STRING" id="272843.PM1867"/>
<dbReference type="EnsemblBacteria" id="AAK03951">
    <property type="protein sequence ID" value="AAK03951"/>
    <property type="gene ID" value="PM1867"/>
</dbReference>
<dbReference type="GeneID" id="77207211"/>
<dbReference type="KEGG" id="pmu:PM1867"/>
<dbReference type="HOGENOM" id="CLU_066645_1_0_6"/>
<dbReference type="OrthoDB" id="9804792at2"/>
<dbReference type="Proteomes" id="UP000000809">
    <property type="component" value="Chromosome"/>
</dbReference>
<dbReference type="GO" id="GO:0043590">
    <property type="term" value="C:bacterial nucleoid"/>
    <property type="evidence" value="ECO:0007669"/>
    <property type="project" value="TreeGrafter"/>
</dbReference>
<dbReference type="GO" id="GO:0006310">
    <property type="term" value="P:DNA recombination"/>
    <property type="evidence" value="ECO:0007669"/>
    <property type="project" value="UniProtKB-UniRule"/>
</dbReference>
<dbReference type="GO" id="GO:0006302">
    <property type="term" value="P:double-strand break repair"/>
    <property type="evidence" value="ECO:0007669"/>
    <property type="project" value="TreeGrafter"/>
</dbReference>
<dbReference type="Gene3D" id="2.40.50.140">
    <property type="entry name" value="Nucleic acid-binding proteins"/>
    <property type="match status" value="1"/>
</dbReference>
<dbReference type="Gene3D" id="1.20.1440.120">
    <property type="entry name" value="Recombination protein O, C-terminal domain"/>
    <property type="match status" value="1"/>
</dbReference>
<dbReference type="HAMAP" id="MF_00201">
    <property type="entry name" value="RecO"/>
    <property type="match status" value="1"/>
</dbReference>
<dbReference type="InterPro" id="IPR037278">
    <property type="entry name" value="ARFGAP/RecO"/>
</dbReference>
<dbReference type="InterPro" id="IPR022572">
    <property type="entry name" value="DNA_rep/recomb_RecO_N"/>
</dbReference>
<dbReference type="InterPro" id="IPR012340">
    <property type="entry name" value="NA-bd_OB-fold"/>
</dbReference>
<dbReference type="InterPro" id="IPR003717">
    <property type="entry name" value="RecO"/>
</dbReference>
<dbReference type="InterPro" id="IPR042242">
    <property type="entry name" value="RecO_C"/>
</dbReference>
<dbReference type="NCBIfam" id="TIGR00613">
    <property type="entry name" value="reco"/>
    <property type="match status" value="1"/>
</dbReference>
<dbReference type="PANTHER" id="PTHR33991">
    <property type="entry name" value="DNA REPAIR PROTEIN RECO"/>
    <property type="match status" value="1"/>
</dbReference>
<dbReference type="PANTHER" id="PTHR33991:SF1">
    <property type="entry name" value="DNA REPAIR PROTEIN RECO"/>
    <property type="match status" value="1"/>
</dbReference>
<dbReference type="Pfam" id="PF02565">
    <property type="entry name" value="RecO_C"/>
    <property type="match status" value="1"/>
</dbReference>
<dbReference type="Pfam" id="PF11967">
    <property type="entry name" value="RecO_N"/>
    <property type="match status" value="1"/>
</dbReference>
<dbReference type="SUPFAM" id="SSF57863">
    <property type="entry name" value="ArfGap/RecO-like zinc finger"/>
    <property type="match status" value="1"/>
</dbReference>
<dbReference type="SUPFAM" id="SSF50249">
    <property type="entry name" value="Nucleic acid-binding proteins"/>
    <property type="match status" value="1"/>
</dbReference>
<keyword id="KW-0227">DNA damage</keyword>
<keyword id="KW-0233">DNA recombination</keyword>
<keyword id="KW-0234">DNA repair</keyword>
<keyword id="KW-1185">Reference proteome</keyword>
<sequence length="240" mass="27639">MRQVIENWQRGFVLHRKAYSETSLLVELFTEETGRLTVLAKGARAKRSALKGILQPFTPLLLRWSGRSELKTLTKVEPAAIALPLQQTALYSGFYVNELLCRVLEPETGYPHLFQDYLRCLTGLASAEHLIEPSLRHFEFQLLQTLGYGVDFCHCAGSGELVDENMTYRYREEKGFIASLIKDNLTFYGRELLAFDARQFHDSATLQAAKRFTRIALKQYLGNKPLKSRELFTQYMLYQK</sequence>
<feature type="chain" id="PRO_0000204978" description="DNA repair protein RecO">
    <location>
        <begin position="1"/>
        <end position="240"/>
    </location>
</feature>
<gene>
    <name type="primary">recO</name>
    <name type="ordered locus">PM1867</name>
</gene>
<name>RECO_PASMU</name>